<proteinExistence type="inferred from homology"/>
<reference key="1">
    <citation type="journal article" date="2005" name="Nature">
        <title>Genome sequencing and analysis of Aspergillus oryzae.</title>
        <authorList>
            <person name="Machida M."/>
            <person name="Asai K."/>
            <person name="Sano M."/>
            <person name="Tanaka T."/>
            <person name="Kumagai T."/>
            <person name="Terai G."/>
            <person name="Kusumoto K."/>
            <person name="Arima T."/>
            <person name="Akita O."/>
            <person name="Kashiwagi Y."/>
            <person name="Abe K."/>
            <person name="Gomi K."/>
            <person name="Horiuchi H."/>
            <person name="Kitamoto K."/>
            <person name="Kobayashi T."/>
            <person name="Takeuchi M."/>
            <person name="Denning D.W."/>
            <person name="Galagan J.E."/>
            <person name="Nierman W.C."/>
            <person name="Yu J."/>
            <person name="Archer D.B."/>
            <person name="Bennett J.W."/>
            <person name="Bhatnagar D."/>
            <person name="Cleveland T.E."/>
            <person name="Fedorova N.D."/>
            <person name="Gotoh O."/>
            <person name="Horikawa H."/>
            <person name="Hosoyama A."/>
            <person name="Ichinomiya M."/>
            <person name="Igarashi R."/>
            <person name="Iwashita K."/>
            <person name="Juvvadi P.R."/>
            <person name="Kato M."/>
            <person name="Kato Y."/>
            <person name="Kin T."/>
            <person name="Kokubun A."/>
            <person name="Maeda H."/>
            <person name="Maeyama N."/>
            <person name="Maruyama J."/>
            <person name="Nagasaki H."/>
            <person name="Nakajima T."/>
            <person name="Oda K."/>
            <person name="Okada K."/>
            <person name="Paulsen I."/>
            <person name="Sakamoto K."/>
            <person name="Sawano T."/>
            <person name="Takahashi M."/>
            <person name="Takase K."/>
            <person name="Terabayashi Y."/>
            <person name="Wortman J.R."/>
            <person name="Yamada O."/>
            <person name="Yamagata Y."/>
            <person name="Anazawa H."/>
            <person name="Hata Y."/>
            <person name="Koide Y."/>
            <person name="Komori T."/>
            <person name="Koyama Y."/>
            <person name="Minetoki T."/>
            <person name="Suharnan S."/>
            <person name="Tanaka A."/>
            <person name="Isono K."/>
            <person name="Kuhara S."/>
            <person name="Ogasawara N."/>
            <person name="Kikuchi H."/>
        </authorList>
    </citation>
    <scope>NUCLEOTIDE SEQUENCE [LARGE SCALE GENOMIC DNA]</scope>
    <source>
        <strain>ATCC 42149 / RIB 40</strain>
    </source>
</reference>
<dbReference type="EC" id="6.3.5.5" evidence="1"/>
<dbReference type="EMBL" id="BA000053">
    <property type="protein sequence ID" value="BAE61952.1"/>
    <property type="molecule type" value="Genomic_DNA"/>
</dbReference>
<dbReference type="RefSeq" id="XP_001823085.1">
    <property type="nucleotide sequence ID" value="XM_001823033.2"/>
</dbReference>
<dbReference type="SMR" id="Q2U913"/>
<dbReference type="STRING" id="510516.Q2U913"/>
<dbReference type="EnsemblFungi" id="BAE61952">
    <property type="protein sequence ID" value="BAE61952"/>
    <property type="gene ID" value="AO090701000214"/>
</dbReference>
<dbReference type="GeneID" id="5995142"/>
<dbReference type="KEGG" id="aor:AO090701000214"/>
<dbReference type="VEuPathDB" id="FungiDB:AO090701000214"/>
<dbReference type="HOGENOM" id="CLU_035901_1_0_1"/>
<dbReference type="OMA" id="CFSVQYH"/>
<dbReference type="OrthoDB" id="33331at5052"/>
<dbReference type="UniPathway" id="UPA00068">
    <property type="reaction ID" value="UER00171"/>
</dbReference>
<dbReference type="Proteomes" id="UP000006564">
    <property type="component" value="Chromosome 5"/>
</dbReference>
<dbReference type="GO" id="GO:0005951">
    <property type="term" value="C:carbamoyl-phosphate synthase complex"/>
    <property type="evidence" value="ECO:0007669"/>
    <property type="project" value="EnsemblFungi"/>
</dbReference>
<dbReference type="GO" id="GO:0005759">
    <property type="term" value="C:mitochondrial matrix"/>
    <property type="evidence" value="ECO:0007669"/>
    <property type="project" value="UniProtKB-SubCell"/>
</dbReference>
<dbReference type="GO" id="GO:0005524">
    <property type="term" value="F:ATP binding"/>
    <property type="evidence" value="ECO:0007669"/>
    <property type="project" value="UniProtKB-KW"/>
</dbReference>
<dbReference type="GO" id="GO:0004088">
    <property type="term" value="F:carbamoyl-phosphate synthase (glutamine-hydrolyzing) activity"/>
    <property type="evidence" value="ECO:0007669"/>
    <property type="project" value="UniProtKB-EC"/>
</dbReference>
<dbReference type="GO" id="GO:0004359">
    <property type="term" value="F:glutaminase activity"/>
    <property type="evidence" value="ECO:0007669"/>
    <property type="project" value="RHEA"/>
</dbReference>
<dbReference type="GO" id="GO:0006207">
    <property type="term" value="P:'de novo' pyrimidine nucleobase biosynthetic process"/>
    <property type="evidence" value="ECO:0007669"/>
    <property type="project" value="InterPro"/>
</dbReference>
<dbReference type="GO" id="GO:0006541">
    <property type="term" value="P:glutamine metabolic process"/>
    <property type="evidence" value="ECO:0007669"/>
    <property type="project" value="InterPro"/>
</dbReference>
<dbReference type="GO" id="GO:0006526">
    <property type="term" value="P:L-arginine biosynthetic process"/>
    <property type="evidence" value="ECO:0007669"/>
    <property type="project" value="UniProtKB-UniPathway"/>
</dbReference>
<dbReference type="GO" id="GO:0006221">
    <property type="term" value="P:pyrimidine nucleotide biosynthetic process"/>
    <property type="evidence" value="ECO:0007669"/>
    <property type="project" value="EnsemblFungi"/>
</dbReference>
<dbReference type="CDD" id="cd01744">
    <property type="entry name" value="GATase1_CPSase"/>
    <property type="match status" value="1"/>
</dbReference>
<dbReference type="FunFam" id="3.40.50.880:FF:000016">
    <property type="entry name" value="Carbamoyl-phosphate synthase arginine-specific small chain"/>
    <property type="match status" value="1"/>
</dbReference>
<dbReference type="FunFam" id="3.50.30.20:FF:000003">
    <property type="entry name" value="Carbamoyl-phosphate synthase arginine-specific small chain"/>
    <property type="match status" value="1"/>
</dbReference>
<dbReference type="Gene3D" id="3.40.50.880">
    <property type="match status" value="1"/>
</dbReference>
<dbReference type="Gene3D" id="3.50.30.20">
    <property type="entry name" value="Carbamoyl-phosphate synthase small subunit, N-terminal domain"/>
    <property type="match status" value="1"/>
</dbReference>
<dbReference type="HAMAP" id="MF_01209">
    <property type="entry name" value="CPSase_S_chain"/>
    <property type="match status" value="1"/>
</dbReference>
<dbReference type="InterPro" id="IPR006274">
    <property type="entry name" value="CarbamoylP_synth_ssu"/>
</dbReference>
<dbReference type="InterPro" id="IPR002474">
    <property type="entry name" value="CarbamoylP_synth_ssu_N"/>
</dbReference>
<dbReference type="InterPro" id="IPR036480">
    <property type="entry name" value="CarbP_synth_ssu_N_sf"/>
</dbReference>
<dbReference type="InterPro" id="IPR029062">
    <property type="entry name" value="Class_I_gatase-like"/>
</dbReference>
<dbReference type="InterPro" id="IPR035686">
    <property type="entry name" value="CPSase_GATase1"/>
</dbReference>
<dbReference type="InterPro" id="IPR017926">
    <property type="entry name" value="GATASE"/>
</dbReference>
<dbReference type="NCBIfam" id="TIGR01368">
    <property type="entry name" value="CPSaseIIsmall"/>
    <property type="match status" value="1"/>
</dbReference>
<dbReference type="NCBIfam" id="NF009475">
    <property type="entry name" value="PRK12838.1"/>
    <property type="match status" value="1"/>
</dbReference>
<dbReference type="PANTHER" id="PTHR11405:SF4">
    <property type="entry name" value="CARBAMOYL-PHOSPHATE SYNTHASE ARGININE-SPECIFIC SMALL CHAIN"/>
    <property type="match status" value="1"/>
</dbReference>
<dbReference type="PANTHER" id="PTHR11405">
    <property type="entry name" value="CARBAMOYLTRANSFERASE FAMILY MEMBER"/>
    <property type="match status" value="1"/>
</dbReference>
<dbReference type="Pfam" id="PF00988">
    <property type="entry name" value="CPSase_sm_chain"/>
    <property type="match status" value="1"/>
</dbReference>
<dbReference type="Pfam" id="PF00117">
    <property type="entry name" value="GATase"/>
    <property type="match status" value="1"/>
</dbReference>
<dbReference type="PRINTS" id="PR00097">
    <property type="entry name" value="ANTSNTHASEII"/>
</dbReference>
<dbReference type="PRINTS" id="PR00099">
    <property type="entry name" value="CPSGATASE"/>
</dbReference>
<dbReference type="PRINTS" id="PR00096">
    <property type="entry name" value="GATASE"/>
</dbReference>
<dbReference type="SMART" id="SM01097">
    <property type="entry name" value="CPSase_sm_chain"/>
    <property type="match status" value="1"/>
</dbReference>
<dbReference type="SUPFAM" id="SSF52021">
    <property type="entry name" value="Carbamoyl phosphate synthetase, small subunit N-terminal domain"/>
    <property type="match status" value="1"/>
</dbReference>
<dbReference type="SUPFAM" id="SSF52317">
    <property type="entry name" value="Class I glutamine amidotransferase-like"/>
    <property type="match status" value="1"/>
</dbReference>
<dbReference type="PROSITE" id="PS51273">
    <property type="entry name" value="GATASE_TYPE_1"/>
    <property type="match status" value="1"/>
</dbReference>
<sequence length="450" mass="49118">MFAARLFKAMPARASAFPSVNASIQSRFMATVRNGRVAHERATFTIRDGPIFHGKSFGARSNISGEAVFTTSLVGYPESLTDPSYRGQILVFTQPLIGNYGVPSAEKDQHGLLKYFESPHLQAAGVVVADVAEQYSHWTAVQSLGEWCAREGVPAISGVDTRAIVTYLREQGSSLARITVGEEYDADQDEAFVDPEQIHLVRQVSTKAPFHVSAADPQCHVAVIDCGVKENILRSLVSRGASITVFPYDYPIHKVAHHFDGVFISNGPGDPTHCQETAYHLRRLMETSQVPIFGICLGHQLLALAIGARTIKLKYGNRAHNIPALDMSTGRCHITSQNHGYAVDASTLPSDWKPYFVNLNDSSNEGMIHKTRPIFSTQFHPEAKGGPLDSSYLFDIYLDSVRKYKASQSAFHPTRDSLPSPLLVDLLAKERVGVQPTIGMQNVAAAAAAA</sequence>
<evidence type="ECO:0000250" key="1">
    <source>
        <dbReference type="UniProtKB" id="P22572"/>
    </source>
</evidence>
<evidence type="ECO:0000255" key="2"/>
<evidence type="ECO:0000255" key="3">
    <source>
        <dbReference type="PROSITE-ProRule" id="PRU00605"/>
    </source>
</evidence>
<evidence type="ECO:0000305" key="4"/>
<feature type="transit peptide" description="Mitochondrion" evidence="2">
    <location>
        <begin position="1"/>
        <end position="29"/>
    </location>
</feature>
<feature type="chain" id="PRO_0000290589" description="Carbamoyl phosphate synthase arginine-specific small chain" evidence="2">
    <location>
        <begin position="30"/>
        <end position="450"/>
    </location>
</feature>
<feature type="domain" description="Glutamine amidotransferase type-1" evidence="3">
    <location>
        <begin position="220"/>
        <end position="407"/>
    </location>
</feature>
<feature type="active site" description="Nucleophile" evidence="3">
    <location>
        <position position="296"/>
    </location>
</feature>
<feature type="active site" evidence="3">
    <location>
        <position position="380"/>
    </location>
</feature>
<feature type="active site" evidence="3">
    <location>
        <position position="382"/>
    </location>
</feature>
<gene>
    <name type="primary">cpa1</name>
    <name type="ORF">AO090701000214</name>
</gene>
<name>CARA_ASPOR</name>
<comment type="function">
    <text evidence="1">Small subunit of the arginine-specific carbamoyl phosphate synthase (CPSase). CPSase catalyzes the formation of carbamoyl phosphate from the ammonia moiety of glutamine, carbonate, and phosphate donated by ATP, the first step of the arginine biosynthetic pathway. The small subunit (glutamine amidotransferase) binds and cleaves glutamine to supply the large subunit with the substrate ammonia.</text>
</comment>
<comment type="catalytic activity">
    <reaction evidence="1">
        <text>hydrogencarbonate + L-glutamine + 2 ATP + H2O = carbamoyl phosphate + L-glutamate + 2 ADP + phosphate + 2 H(+)</text>
        <dbReference type="Rhea" id="RHEA:18633"/>
        <dbReference type="ChEBI" id="CHEBI:15377"/>
        <dbReference type="ChEBI" id="CHEBI:15378"/>
        <dbReference type="ChEBI" id="CHEBI:17544"/>
        <dbReference type="ChEBI" id="CHEBI:29985"/>
        <dbReference type="ChEBI" id="CHEBI:30616"/>
        <dbReference type="ChEBI" id="CHEBI:43474"/>
        <dbReference type="ChEBI" id="CHEBI:58228"/>
        <dbReference type="ChEBI" id="CHEBI:58359"/>
        <dbReference type="ChEBI" id="CHEBI:456216"/>
        <dbReference type="EC" id="6.3.5.5"/>
    </reaction>
</comment>
<comment type="catalytic activity">
    <molecule>Carbamoyl phosphate synthase arginine-specific small chain</molecule>
    <reaction evidence="1">
        <text>L-glutamine + H2O = L-glutamate + NH4(+)</text>
        <dbReference type="Rhea" id="RHEA:15889"/>
        <dbReference type="ChEBI" id="CHEBI:15377"/>
        <dbReference type="ChEBI" id="CHEBI:28938"/>
        <dbReference type="ChEBI" id="CHEBI:29985"/>
        <dbReference type="ChEBI" id="CHEBI:58359"/>
    </reaction>
</comment>
<comment type="pathway">
    <text evidence="1">Amino-acid biosynthesis; L-arginine biosynthesis; carbamoyl phosphate from bicarbonate: step 1/1.</text>
</comment>
<comment type="subunit">
    <text evidence="1">Heterodimer composed of 2 chains; the small (or glutamine) chain promotes the hydrolysis of glutamine to ammonia, which is used by the large (or ammonia) chain to synthesize carbamoyl phosphate.</text>
</comment>
<comment type="subcellular location">
    <subcellularLocation>
        <location evidence="1">Mitochondrion matrix</location>
    </subcellularLocation>
</comment>
<comment type="similarity">
    <text evidence="4">Belongs to the CarA family.</text>
</comment>
<accession>Q2U913</accession>
<protein>
    <recommendedName>
        <fullName>Carbamoyl phosphate synthase arginine-specific small chain</fullName>
        <shortName>CPS</shortName>
        <shortName>CPSase</shortName>
        <ecNumber evidence="1">6.3.5.5</ecNumber>
    </recommendedName>
    <alternativeName>
        <fullName>Arginine-specific carbamoyl phosphate synthetase, glutamine chain</fullName>
    </alternativeName>
    <alternativeName>
        <fullName>Glutamine-dependent carbamoyl phosphate synthetase</fullName>
    </alternativeName>
</protein>
<keyword id="KW-0028">Amino-acid biosynthesis</keyword>
<keyword id="KW-0055">Arginine biosynthesis</keyword>
<keyword id="KW-0067">ATP-binding</keyword>
<keyword id="KW-0315">Glutamine amidotransferase</keyword>
<keyword id="KW-0436">Ligase</keyword>
<keyword id="KW-0496">Mitochondrion</keyword>
<keyword id="KW-0547">Nucleotide-binding</keyword>
<keyword id="KW-1185">Reference proteome</keyword>
<keyword id="KW-0809">Transit peptide</keyword>
<organism>
    <name type="scientific">Aspergillus oryzae (strain ATCC 42149 / RIB 40)</name>
    <name type="common">Yellow koji mold</name>
    <dbReference type="NCBI Taxonomy" id="510516"/>
    <lineage>
        <taxon>Eukaryota</taxon>
        <taxon>Fungi</taxon>
        <taxon>Dikarya</taxon>
        <taxon>Ascomycota</taxon>
        <taxon>Pezizomycotina</taxon>
        <taxon>Eurotiomycetes</taxon>
        <taxon>Eurotiomycetidae</taxon>
        <taxon>Eurotiales</taxon>
        <taxon>Aspergillaceae</taxon>
        <taxon>Aspergillus</taxon>
        <taxon>Aspergillus subgen. Circumdati</taxon>
    </lineage>
</organism>